<reference key="1">
    <citation type="submission" date="2006-05" db="EMBL/GenBank/DDBJ databases">
        <title>Complete sequence of chromosome 1 of Burkholderia cenocepacia AU 1054.</title>
        <authorList>
            <consortium name="US DOE Joint Genome Institute"/>
            <person name="Copeland A."/>
            <person name="Lucas S."/>
            <person name="Lapidus A."/>
            <person name="Barry K."/>
            <person name="Detter J.C."/>
            <person name="Glavina del Rio T."/>
            <person name="Hammon N."/>
            <person name="Israni S."/>
            <person name="Dalin E."/>
            <person name="Tice H."/>
            <person name="Pitluck S."/>
            <person name="Chain P."/>
            <person name="Malfatti S."/>
            <person name="Shin M."/>
            <person name="Vergez L."/>
            <person name="Schmutz J."/>
            <person name="Larimer F."/>
            <person name="Land M."/>
            <person name="Hauser L."/>
            <person name="Kyrpides N."/>
            <person name="Lykidis A."/>
            <person name="LiPuma J.J."/>
            <person name="Konstantinidis K."/>
            <person name="Tiedje J.M."/>
            <person name="Richardson P."/>
        </authorList>
    </citation>
    <scope>NUCLEOTIDE SEQUENCE [LARGE SCALE GENOMIC DNA]</scope>
    <source>
        <strain>AU 1054</strain>
    </source>
</reference>
<accession>Q1BSB3</accession>
<comment type="function">
    <text evidence="1">Catalyzes the NADPH-dependent reduction of glutamyl-tRNA(Glu) to glutamate 1-semialdehyde (GSA).</text>
</comment>
<comment type="catalytic activity">
    <reaction evidence="1">
        <text>(S)-4-amino-5-oxopentanoate + tRNA(Glu) + NADP(+) = L-glutamyl-tRNA(Glu) + NADPH + H(+)</text>
        <dbReference type="Rhea" id="RHEA:12344"/>
        <dbReference type="Rhea" id="RHEA-COMP:9663"/>
        <dbReference type="Rhea" id="RHEA-COMP:9680"/>
        <dbReference type="ChEBI" id="CHEBI:15378"/>
        <dbReference type="ChEBI" id="CHEBI:57501"/>
        <dbReference type="ChEBI" id="CHEBI:57783"/>
        <dbReference type="ChEBI" id="CHEBI:58349"/>
        <dbReference type="ChEBI" id="CHEBI:78442"/>
        <dbReference type="ChEBI" id="CHEBI:78520"/>
        <dbReference type="EC" id="1.2.1.70"/>
    </reaction>
</comment>
<comment type="pathway">
    <text evidence="1">Porphyrin-containing compound metabolism; protoporphyrin-IX biosynthesis; 5-aminolevulinate from L-glutamyl-tRNA(Glu): step 1/2.</text>
</comment>
<comment type="subunit">
    <text evidence="1">Homodimer.</text>
</comment>
<comment type="domain">
    <text evidence="1">Possesses an unusual extended V-shaped dimeric structure with each monomer consisting of three distinct domains arranged along a curved 'spinal' alpha-helix. The N-terminal catalytic domain specifically recognizes the glutamate moiety of the substrate. The second domain is the NADPH-binding domain, and the third C-terminal domain is responsible for dimerization.</text>
</comment>
<comment type="miscellaneous">
    <text evidence="1">During catalysis, the active site Cys acts as a nucleophile attacking the alpha-carbonyl group of tRNA-bound glutamate with the formation of a thioester intermediate between enzyme and glutamate, and the concomitant release of tRNA(Glu). The thioester intermediate is finally reduced by direct hydride transfer from NADPH, to form the product GSA.</text>
</comment>
<comment type="similarity">
    <text evidence="1">Belongs to the glutamyl-tRNA reductase family.</text>
</comment>
<proteinExistence type="inferred from homology"/>
<dbReference type="EC" id="1.2.1.70" evidence="1"/>
<dbReference type="EMBL" id="CP000378">
    <property type="protein sequence ID" value="ABF77492.1"/>
    <property type="molecule type" value="Genomic_DNA"/>
</dbReference>
<dbReference type="SMR" id="Q1BSB3"/>
<dbReference type="HOGENOM" id="CLU_035113_2_2_4"/>
<dbReference type="UniPathway" id="UPA00251">
    <property type="reaction ID" value="UER00316"/>
</dbReference>
<dbReference type="GO" id="GO:0008883">
    <property type="term" value="F:glutamyl-tRNA reductase activity"/>
    <property type="evidence" value="ECO:0007669"/>
    <property type="project" value="UniProtKB-UniRule"/>
</dbReference>
<dbReference type="GO" id="GO:0050661">
    <property type="term" value="F:NADP binding"/>
    <property type="evidence" value="ECO:0007669"/>
    <property type="project" value="InterPro"/>
</dbReference>
<dbReference type="GO" id="GO:0019353">
    <property type="term" value="P:protoporphyrinogen IX biosynthetic process from glutamate"/>
    <property type="evidence" value="ECO:0007669"/>
    <property type="project" value="TreeGrafter"/>
</dbReference>
<dbReference type="CDD" id="cd05213">
    <property type="entry name" value="NAD_bind_Glutamyl_tRNA_reduct"/>
    <property type="match status" value="1"/>
</dbReference>
<dbReference type="FunFam" id="3.30.460.30:FF:000001">
    <property type="entry name" value="Glutamyl-tRNA reductase"/>
    <property type="match status" value="1"/>
</dbReference>
<dbReference type="FunFam" id="3.40.50.720:FF:000031">
    <property type="entry name" value="Glutamyl-tRNA reductase"/>
    <property type="match status" value="1"/>
</dbReference>
<dbReference type="Gene3D" id="3.30.460.30">
    <property type="entry name" value="Glutamyl-tRNA reductase, N-terminal domain"/>
    <property type="match status" value="1"/>
</dbReference>
<dbReference type="Gene3D" id="3.40.50.720">
    <property type="entry name" value="NAD(P)-binding Rossmann-like Domain"/>
    <property type="match status" value="1"/>
</dbReference>
<dbReference type="HAMAP" id="MF_00087">
    <property type="entry name" value="Glu_tRNA_reductase"/>
    <property type="match status" value="1"/>
</dbReference>
<dbReference type="InterPro" id="IPR000343">
    <property type="entry name" value="4pyrrol_synth_GluRdtase"/>
</dbReference>
<dbReference type="InterPro" id="IPR015896">
    <property type="entry name" value="4pyrrol_synth_GluRdtase_dimer"/>
</dbReference>
<dbReference type="InterPro" id="IPR015895">
    <property type="entry name" value="4pyrrol_synth_GluRdtase_N"/>
</dbReference>
<dbReference type="InterPro" id="IPR018214">
    <property type="entry name" value="GluRdtase_CS"/>
</dbReference>
<dbReference type="InterPro" id="IPR036453">
    <property type="entry name" value="GluRdtase_dimer_dom_sf"/>
</dbReference>
<dbReference type="InterPro" id="IPR036343">
    <property type="entry name" value="GluRdtase_N_sf"/>
</dbReference>
<dbReference type="InterPro" id="IPR036291">
    <property type="entry name" value="NAD(P)-bd_dom_sf"/>
</dbReference>
<dbReference type="InterPro" id="IPR006151">
    <property type="entry name" value="Shikm_DH/Glu-tRNA_Rdtase"/>
</dbReference>
<dbReference type="NCBIfam" id="TIGR01035">
    <property type="entry name" value="hemA"/>
    <property type="match status" value="1"/>
</dbReference>
<dbReference type="PANTHER" id="PTHR43013">
    <property type="entry name" value="GLUTAMYL-TRNA REDUCTASE"/>
    <property type="match status" value="1"/>
</dbReference>
<dbReference type="PANTHER" id="PTHR43013:SF1">
    <property type="entry name" value="GLUTAMYL-TRNA REDUCTASE"/>
    <property type="match status" value="1"/>
</dbReference>
<dbReference type="Pfam" id="PF00745">
    <property type="entry name" value="GlutR_dimer"/>
    <property type="match status" value="1"/>
</dbReference>
<dbReference type="Pfam" id="PF05201">
    <property type="entry name" value="GlutR_N"/>
    <property type="match status" value="1"/>
</dbReference>
<dbReference type="Pfam" id="PF01488">
    <property type="entry name" value="Shikimate_DH"/>
    <property type="match status" value="1"/>
</dbReference>
<dbReference type="PIRSF" id="PIRSF000445">
    <property type="entry name" value="4pyrrol_synth_GluRdtase"/>
    <property type="match status" value="1"/>
</dbReference>
<dbReference type="SUPFAM" id="SSF69742">
    <property type="entry name" value="Glutamyl tRNA-reductase catalytic, N-terminal domain"/>
    <property type="match status" value="1"/>
</dbReference>
<dbReference type="SUPFAM" id="SSF69075">
    <property type="entry name" value="Glutamyl tRNA-reductase dimerization domain"/>
    <property type="match status" value="1"/>
</dbReference>
<dbReference type="SUPFAM" id="SSF51735">
    <property type="entry name" value="NAD(P)-binding Rossmann-fold domains"/>
    <property type="match status" value="1"/>
</dbReference>
<dbReference type="PROSITE" id="PS00747">
    <property type="entry name" value="GLUTR"/>
    <property type="match status" value="1"/>
</dbReference>
<feature type="chain" id="PRO_1000004597" description="Glutamyl-tRNA reductase">
    <location>
        <begin position="1"/>
        <end position="432"/>
    </location>
</feature>
<feature type="active site" description="Nucleophile" evidence="1">
    <location>
        <position position="56"/>
    </location>
</feature>
<feature type="binding site" evidence="1">
    <location>
        <begin position="55"/>
        <end position="58"/>
    </location>
    <ligand>
        <name>substrate</name>
    </ligand>
</feature>
<feature type="binding site" evidence="1">
    <location>
        <position position="114"/>
    </location>
    <ligand>
        <name>substrate</name>
    </ligand>
</feature>
<feature type="binding site" evidence="1">
    <location>
        <begin position="119"/>
        <end position="121"/>
    </location>
    <ligand>
        <name>substrate</name>
    </ligand>
</feature>
<feature type="binding site" evidence="1">
    <location>
        <position position="125"/>
    </location>
    <ligand>
        <name>substrate</name>
    </ligand>
</feature>
<feature type="binding site" evidence="1">
    <location>
        <begin position="194"/>
        <end position="199"/>
    </location>
    <ligand>
        <name>NADP(+)</name>
        <dbReference type="ChEBI" id="CHEBI:58349"/>
    </ligand>
</feature>
<feature type="site" description="Important for activity" evidence="1">
    <location>
        <position position="104"/>
    </location>
</feature>
<sequence length="432" mass="47457">MQLLTIGINHHTAPVALRERVAFPLEQIKPALVTFKNVFLGPQAPNTPEAAILSTCNRTELYCATDDRAAREGAVRWLSEYHRIPVDELAPHVYALPQSEAVRHAFRVASGLDSMVLGETQILGQMKDAVRTATEAGALGTYLNQLFQRTFAVAKEVRGTTEIGTQSVSMAAAAVRLAQRIFEKVSDQRVLLIGAGEMIELCATHFAAQGPRELVVANRTAERGQRLAERFNGRAMPLADLPTRMHEFDIIVSCTASTLPIIGLGAVERAVKARRHRPIFMVDLAVPRDIEPEVGKLKDVFLYTVDDLGAIVREGNASRQAAVAQAEAIIETRVQNFMQWLDTRSVVPVIRHMHTQADALRRAEVEKAQKLLARGDDPAAVLEALSQALTNKLIHGPTSALNRVNGADRDSLIDLMRGFYQHAPRSNDQSGH</sequence>
<organism>
    <name type="scientific">Burkholderia orbicola (strain AU 1054)</name>
    <dbReference type="NCBI Taxonomy" id="331271"/>
    <lineage>
        <taxon>Bacteria</taxon>
        <taxon>Pseudomonadati</taxon>
        <taxon>Pseudomonadota</taxon>
        <taxon>Betaproteobacteria</taxon>
        <taxon>Burkholderiales</taxon>
        <taxon>Burkholderiaceae</taxon>
        <taxon>Burkholderia</taxon>
        <taxon>Burkholderia cepacia complex</taxon>
        <taxon>Burkholderia orbicola</taxon>
    </lineage>
</organism>
<evidence type="ECO:0000255" key="1">
    <source>
        <dbReference type="HAMAP-Rule" id="MF_00087"/>
    </source>
</evidence>
<protein>
    <recommendedName>
        <fullName evidence="1">Glutamyl-tRNA reductase</fullName>
        <shortName evidence="1">GluTR</shortName>
        <ecNumber evidence="1">1.2.1.70</ecNumber>
    </recommendedName>
</protein>
<gene>
    <name evidence="1" type="primary">hemA</name>
    <name type="ordered locus">Bcen_2593</name>
</gene>
<keyword id="KW-0521">NADP</keyword>
<keyword id="KW-0560">Oxidoreductase</keyword>
<keyword id="KW-0627">Porphyrin biosynthesis</keyword>
<name>HEM1_BURO1</name>